<keyword id="KW-0067">ATP-binding</keyword>
<keyword id="KW-0963">Cytoplasm</keyword>
<keyword id="KW-0460">Magnesium</keyword>
<keyword id="KW-0479">Metal-binding</keyword>
<keyword id="KW-0547">Nucleotide-binding</keyword>
<keyword id="KW-0554">One-carbon metabolism</keyword>
<keyword id="KW-0630">Potassium</keyword>
<keyword id="KW-1185">Reference proteome</keyword>
<keyword id="KW-0808">Transferase</keyword>
<feature type="chain" id="PRO_0000174574" description="S-adenosylmethionine synthase">
    <location>
        <begin position="1"/>
        <end position="396"/>
    </location>
</feature>
<feature type="region of interest" description="Flexible loop" evidence="1">
    <location>
        <begin position="100"/>
        <end position="110"/>
    </location>
</feature>
<feature type="binding site" description="in other chain" evidence="1">
    <location>
        <position position="16"/>
    </location>
    <ligand>
        <name>ATP</name>
        <dbReference type="ChEBI" id="CHEBI:30616"/>
        <note>ligand shared between two neighboring subunits</note>
    </ligand>
</feature>
<feature type="binding site" evidence="1">
    <location>
        <position position="18"/>
    </location>
    <ligand>
        <name>Mg(2+)</name>
        <dbReference type="ChEBI" id="CHEBI:18420"/>
    </ligand>
</feature>
<feature type="binding site" evidence="1">
    <location>
        <position position="44"/>
    </location>
    <ligand>
        <name>K(+)</name>
        <dbReference type="ChEBI" id="CHEBI:29103"/>
    </ligand>
</feature>
<feature type="binding site" description="in other chain" evidence="1">
    <location>
        <position position="57"/>
    </location>
    <ligand>
        <name>L-methionine</name>
        <dbReference type="ChEBI" id="CHEBI:57844"/>
        <note>ligand shared between two neighboring subunits</note>
    </ligand>
</feature>
<feature type="binding site" description="in other chain" evidence="1">
    <location>
        <position position="100"/>
    </location>
    <ligand>
        <name>L-methionine</name>
        <dbReference type="ChEBI" id="CHEBI:57844"/>
        <note>ligand shared between two neighboring subunits</note>
    </ligand>
</feature>
<feature type="binding site" description="in other chain" evidence="1">
    <location>
        <begin position="165"/>
        <end position="167"/>
    </location>
    <ligand>
        <name>ATP</name>
        <dbReference type="ChEBI" id="CHEBI:30616"/>
        <note>ligand shared between two neighboring subunits</note>
    </ligand>
</feature>
<feature type="binding site" evidence="1">
    <location>
        <position position="240"/>
    </location>
    <ligand>
        <name>ATP</name>
        <dbReference type="ChEBI" id="CHEBI:30616"/>
        <note>ligand shared between two neighboring subunits</note>
    </ligand>
</feature>
<feature type="binding site" evidence="1">
    <location>
        <position position="240"/>
    </location>
    <ligand>
        <name>L-methionine</name>
        <dbReference type="ChEBI" id="CHEBI:57844"/>
        <note>ligand shared between two neighboring subunits</note>
    </ligand>
</feature>
<feature type="binding site" description="in other chain" evidence="1">
    <location>
        <begin position="246"/>
        <end position="247"/>
    </location>
    <ligand>
        <name>ATP</name>
        <dbReference type="ChEBI" id="CHEBI:30616"/>
        <note>ligand shared between two neighboring subunits</note>
    </ligand>
</feature>
<feature type="binding site" evidence="1">
    <location>
        <position position="263"/>
    </location>
    <ligand>
        <name>ATP</name>
        <dbReference type="ChEBI" id="CHEBI:30616"/>
        <note>ligand shared between two neighboring subunits</note>
    </ligand>
</feature>
<feature type="binding site" evidence="1">
    <location>
        <position position="267"/>
    </location>
    <ligand>
        <name>ATP</name>
        <dbReference type="ChEBI" id="CHEBI:30616"/>
        <note>ligand shared between two neighboring subunits</note>
    </ligand>
</feature>
<feature type="binding site" description="in other chain" evidence="1">
    <location>
        <position position="271"/>
    </location>
    <ligand>
        <name>L-methionine</name>
        <dbReference type="ChEBI" id="CHEBI:57844"/>
        <note>ligand shared between two neighboring subunits</note>
    </ligand>
</feature>
<name>METK_PSESM</name>
<sequence>MSEYSLFTSESVSEGHPDKIADQISDAVLDAIIAEDKYARVACETLVKTGVAIIAGEVSTSAWVDLEDIVRNVILDIGYNSSDVGFDGATCGVMNIIGKQSVDIAQGVDRSKPEDQGAGDQGLMFGYASNETDVLMPAPITFSHQLVQRQAEARKSGLLPWLRPDAKSQVTCRYENGKVVGVDAIVLSTQHNPDVSYKDLREGVMELIVKHVIPAHLLHKDTQFHINPTGNFIIGGPVGDCGLTGRKIIVDTYGGMARHGGGAFSGKDPSKVDRSAAYAGRYVAKNIVAAGLAERCEIQVSYAIGVAQPTSISLNTFGTGKLSDDKIIKLVRDNFDLRPYAITTMLDLLHPMYQATAAYGHFGRTPVEMTVGDDTFTAFTWEKTDRADALRAAAGL</sequence>
<reference key="1">
    <citation type="journal article" date="2003" name="Proc. Natl. Acad. Sci. U.S.A.">
        <title>The complete genome sequence of the Arabidopsis and tomato pathogen Pseudomonas syringae pv. tomato DC3000.</title>
        <authorList>
            <person name="Buell C.R."/>
            <person name="Joardar V."/>
            <person name="Lindeberg M."/>
            <person name="Selengut J."/>
            <person name="Paulsen I.T."/>
            <person name="Gwinn M.L."/>
            <person name="Dodson R.J."/>
            <person name="DeBoy R.T."/>
            <person name="Durkin A.S."/>
            <person name="Kolonay J.F."/>
            <person name="Madupu R."/>
            <person name="Daugherty S.C."/>
            <person name="Brinkac L.M."/>
            <person name="Beanan M.J."/>
            <person name="Haft D.H."/>
            <person name="Nelson W.C."/>
            <person name="Davidsen T.M."/>
            <person name="Zafar N."/>
            <person name="Zhou L."/>
            <person name="Liu J."/>
            <person name="Yuan Q."/>
            <person name="Khouri H.M."/>
            <person name="Fedorova N.B."/>
            <person name="Tran B."/>
            <person name="Russell D."/>
            <person name="Berry K.J."/>
            <person name="Utterback T.R."/>
            <person name="Van Aken S.E."/>
            <person name="Feldblyum T.V."/>
            <person name="D'Ascenzo M."/>
            <person name="Deng W.-L."/>
            <person name="Ramos A.R."/>
            <person name="Alfano J.R."/>
            <person name="Cartinhour S."/>
            <person name="Chatterjee A.K."/>
            <person name="Delaney T.P."/>
            <person name="Lazarowitz S.G."/>
            <person name="Martin G.B."/>
            <person name="Schneider D.J."/>
            <person name="Tang X."/>
            <person name="Bender C.L."/>
            <person name="White O."/>
            <person name="Fraser C.M."/>
            <person name="Collmer A."/>
        </authorList>
    </citation>
    <scope>NUCLEOTIDE SEQUENCE [LARGE SCALE GENOMIC DNA]</scope>
    <source>
        <strain>ATCC BAA-871 / DC3000</strain>
    </source>
</reference>
<proteinExistence type="inferred from homology"/>
<comment type="function">
    <text evidence="1">Catalyzes the formation of S-adenosylmethionine (AdoMet) from methionine and ATP. The overall synthetic reaction is composed of two sequential steps, AdoMet formation and the subsequent tripolyphosphate hydrolysis which occurs prior to release of AdoMet from the enzyme.</text>
</comment>
<comment type="catalytic activity">
    <reaction evidence="1">
        <text>L-methionine + ATP + H2O = S-adenosyl-L-methionine + phosphate + diphosphate</text>
        <dbReference type="Rhea" id="RHEA:21080"/>
        <dbReference type="ChEBI" id="CHEBI:15377"/>
        <dbReference type="ChEBI" id="CHEBI:30616"/>
        <dbReference type="ChEBI" id="CHEBI:33019"/>
        <dbReference type="ChEBI" id="CHEBI:43474"/>
        <dbReference type="ChEBI" id="CHEBI:57844"/>
        <dbReference type="ChEBI" id="CHEBI:59789"/>
        <dbReference type="EC" id="2.5.1.6"/>
    </reaction>
</comment>
<comment type="cofactor">
    <cofactor evidence="1">
        <name>Mg(2+)</name>
        <dbReference type="ChEBI" id="CHEBI:18420"/>
    </cofactor>
    <text evidence="1">Binds 2 divalent ions per subunit.</text>
</comment>
<comment type="cofactor">
    <cofactor evidence="1">
        <name>K(+)</name>
        <dbReference type="ChEBI" id="CHEBI:29103"/>
    </cofactor>
    <text evidence="1">Binds 1 potassium ion per subunit.</text>
</comment>
<comment type="pathway">
    <text evidence="1">Amino-acid biosynthesis; S-adenosyl-L-methionine biosynthesis; S-adenosyl-L-methionine from L-methionine: step 1/1.</text>
</comment>
<comment type="subunit">
    <text evidence="1">Homotetramer; dimer of dimers.</text>
</comment>
<comment type="subcellular location">
    <subcellularLocation>
        <location evidence="1">Cytoplasm</location>
    </subcellularLocation>
</comment>
<comment type="similarity">
    <text evidence="1">Belongs to the AdoMet synthase family.</text>
</comment>
<dbReference type="EC" id="2.5.1.6" evidence="1"/>
<dbReference type="EMBL" id="AE016853">
    <property type="protein sequence ID" value="AAO53927.1"/>
    <property type="molecule type" value="Genomic_DNA"/>
</dbReference>
<dbReference type="RefSeq" id="NP_790232.1">
    <property type="nucleotide sequence ID" value="NC_004578.1"/>
</dbReference>
<dbReference type="RefSeq" id="WP_002555698.1">
    <property type="nucleotide sequence ID" value="NC_004578.1"/>
</dbReference>
<dbReference type="SMR" id="Q88AK7"/>
<dbReference type="STRING" id="223283.PSPTO_0383"/>
<dbReference type="GeneID" id="96221284"/>
<dbReference type="KEGG" id="pst:PSPTO_0383"/>
<dbReference type="PATRIC" id="fig|223283.9.peg.400"/>
<dbReference type="eggNOG" id="COG0192">
    <property type="taxonomic scope" value="Bacteria"/>
</dbReference>
<dbReference type="HOGENOM" id="CLU_041802_1_1_6"/>
<dbReference type="OrthoDB" id="9801686at2"/>
<dbReference type="PhylomeDB" id="Q88AK7"/>
<dbReference type="UniPathway" id="UPA00315">
    <property type="reaction ID" value="UER00080"/>
</dbReference>
<dbReference type="Proteomes" id="UP000002515">
    <property type="component" value="Chromosome"/>
</dbReference>
<dbReference type="GO" id="GO:0005737">
    <property type="term" value="C:cytoplasm"/>
    <property type="evidence" value="ECO:0007669"/>
    <property type="project" value="UniProtKB-SubCell"/>
</dbReference>
<dbReference type="GO" id="GO:0005524">
    <property type="term" value="F:ATP binding"/>
    <property type="evidence" value="ECO:0007669"/>
    <property type="project" value="UniProtKB-UniRule"/>
</dbReference>
<dbReference type="GO" id="GO:0000287">
    <property type="term" value="F:magnesium ion binding"/>
    <property type="evidence" value="ECO:0007669"/>
    <property type="project" value="UniProtKB-UniRule"/>
</dbReference>
<dbReference type="GO" id="GO:0004478">
    <property type="term" value="F:methionine adenosyltransferase activity"/>
    <property type="evidence" value="ECO:0007669"/>
    <property type="project" value="UniProtKB-UniRule"/>
</dbReference>
<dbReference type="GO" id="GO:0006730">
    <property type="term" value="P:one-carbon metabolic process"/>
    <property type="evidence" value="ECO:0007669"/>
    <property type="project" value="UniProtKB-KW"/>
</dbReference>
<dbReference type="GO" id="GO:0006556">
    <property type="term" value="P:S-adenosylmethionine biosynthetic process"/>
    <property type="evidence" value="ECO:0007669"/>
    <property type="project" value="UniProtKB-UniRule"/>
</dbReference>
<dbReference type="CDD" id="cd18079">
    <property type="entry name" value="S-AdoMet_synt"/>
    <property type="match status" value="1"/>
</dbReference>
<dbReference type="FunFam" id="3.30.300.10:FF:000003">
    <property type="entry name" value="S-adenosylmethionine synthase"/>
    <property type="match status" value="1"/>
</dbReference>
<dbReference type="Gene3D" id="3.30.300.10">
    <property type="match status" value="3"/>
</dbReference>
<dbReference type="HAMAP" id="MF_00086">
    <property type="entry name" value="S_AdoMet_synth1"/>
    <property type="match status" value="1"/>
</dbReference>
<dbReference type="InterPro" id="IPR022631">
    <property type="entry name" value="ADOMET_SYNTHASE_CS"/>
</dbReference>
<dbReference type="InterPro" id="IPR022630">
    <property type="entry name" value="S-AdoMet_synt_C"/>
</dbReference>
<dbReference type="InterPro" id="IPR022629">
    <property type="entry name" value="S-AdoMet_synt_central"/>
</dbReference>
<dbReference type="InterPro" id="IPR022628">
    <property type="entry name" value="S-AdoMet_synt_N"/>
</dbReference>
<dbReference type="InterPro" id="IPR002133">
    <property type="entry name" value="S-AdoMet_synthetase"/>
</dbReference>
<dbReference type="InterPro" id="IPR022636">
    <property type="entry name" value="S-AdoMet_synthetase_sfam"/>
</dbReference>
<dbReference type="NCBIfam" id="TIGR01034">
    <property type="entry name" value="metK"/>
    <property type="match status" value="1"/>
</dbReference>
<dbReference type="PANTHER" id="PTHR11964">
    <property type="entry name" value="S-ADENOSYLMETHIONINE SYNTHETASE"/>
    <property type="match status" value="1"/>
</dbReference>
<dbReference type="Pfam" id="PF02773">
    <property type="entry name" value="S-AdoMet_synt_C"/>
    <property type="match status" value="1"/>
</dbReference>
<dbReference type="Pfam" id="PF02772">
    <property type="entry name" value="S-AdoMet_synt_M"/>
    <property type="match status" value="1"/>
</dbReference>
<dbReference type="Pfam" id="PF00438">
    <property type="entry name" value="S-AdoMet_synt_N"/>
    <property type="match status" value="1"/>
</dbReference>
<dbReference type="PIRSF" id="PIRSF000497">
    <property type="entry name" value="MAT"/>
    <property type="match status" value="1"/>
</dbReference>
<dbReference type="SUPFAM" id="SSF55973">
    <property type="entry name" value="S-adenosylmethionine synthetase"/>
    <property type="match status" value="3"/>
</dbReference>
<dbReference type="PROSITE" id="PS00376">
    <property type="entry name" value="ADOMET_SYNTHASE_1"/>
    <property type="match status" value="1"/>
</dbReference>
<dbReference type="PROSITE" id="PS00377">
    <property type="entry name" value="ADOMET_SYNTHASE_2"/>
    <property type="match status" value="1"/>
</dbReference>
<gene>
    <name evidence="1" type="primary">metK</name>
    <name type="ordered locus">PSPTO_0383</name>
</gene>
<organism>
    <name type="scientific">Pseudomonas syringae pv. tomato (strain ATCC BAA-871 / DC3000)</name>
    <dbReference type="NCBI Taxonomy" id="223283"/>
    <lineage>
        <taxon>Bacteria</taxon>
        <taxon>Pseudomonadati</taxon>
        <taxon>Pseudomonadota</taxon>
        <taxon>Gammaproteobacteria</taxon>
        <taxon>Pseudomonadales</taxon>
        <taxon>Pseudomonadaceae</taxon>
        <taxon>Pseudomonas</taxon>
    </lineage>
</organism>
<protein>
    <recommendedName>
        <fullName evidence="1">S-adenosylmethionine synthase</fullName>
        <shortName evidence="1">AdoMet synthase</shortName>
        <ecNumber evidence="1">2.5.1.6</ecNumber>
    </recommendedName>
    <alternativeName>
        <fullName evidence="1">MAT</fullName>
    </alternativeName>
    <alternativeName>
        <fullName evidence="1">Methionine adenosyltransferase</fullName>
    </alternativeName>
</protein>
<accession>Q88AK7</accession>
<evidence type="ECO:0000255" key="1">
    <source>
        <dbReference type="HAMAP-Rule" id="MF_00086"/>
    </source>
</evidence>